<organism>
    <name type="scientific">Mouse intracisternal a-particle MIA14</name>
    <name type="common">IAP-MIA14</name>
    <dbReference type="NCBI Taxonomy" id="11753"/>
    <lineage>
        <taxon>Viruses</taxon>
        <taxon>Riboviria</taxon>
        <taxon>Pararnavirae</taxon>
        <taxon>Artverviricota</taxon>
        <taxon>Revtraviricetes</taxon>
        <taxon>Ortervirales</taxon>
        <taxon>Retroviridae</taxon>
        <taxon>Intracisternal A-particles</taxon>
        <taxon>Mouse intracisternal a-particle MIAE</taxon>
    </lineage>
</organism>
<protein>
    <recommendedName>
        <fullName>Intracisternal A-particle Gag-related polyprotein</fullName>
    </recommendedName>
    <component>
        <recommendedName>
            <fullName>Phosphorylated protein</fullName>
        </recommendedName>
    </component>
    <component>
        <recommendedName>
            <fullName>Capsid protein</fullName>
        </recommendedName>
    </component>
    <component>
        <recommendedName>
            <fullName>Nucleocapsid protein</fullName>
        </recommendedName>
    </component>
    <component>
        <recommendedName>
            <fullName>Protease</fullName>
            <ecNumber evidence="6">3.4.23.-</ecNumber>
        </recommendedName>
    </component>
</protein>
<gene>
    <name type="primary">gag</name>
</gene>
<reference key="1">
    <citation type="journal article" date="1987" name="J. Virol.">
        <title>Nucleotide sequence of a complete mouse intracisternal A-particle genome: relationship to known aspects of particle assembly and function.</title>
        <authorList>
            <person name="Mietz J.A."/>
            <person name="Grossman Z."/>
            <person name="Lueders K.K."/>
            <person name="Kuff E.L."/>
        </authorList>
    </citation>
    <scope>NUCLEOTIDE SEQUENCE [GENOMIC DNA]</scope>
</reference>
<dbReference type="EC" id="3.4.23.-" evidence="6"/>
<dbReference type="EMBL" id="M17551">
    <property type="protein sequence ID" value="AAC12789.1"/>
    <property type="molecule type" value="Genomic_DNA"/>
</dbReference>
<dbReference type="PIR" id="A26787">
    <property type="entry name" value="FOMSIA"/>
</dbReference>
<dbReference type="BMRB" id="P11365"/>
<dbReference type="SMR" id="P11365"/>
<dbReference type="MEROPS" id="A02.016"/>
<dbReference type="GO" id="GO:0004190">
    <property type="term" value="F:aspartic-type endopeptidase activity"/>
    <property type="evidence" value="ECO:0007669"/>
    <property type="project" value="UniProtKB-KW"/>
</dbReference>
<dbReference type="GO" id="GO:0003676">
    <property type="term" value="F:nucleic acid binding"/>
    <property type="evidence" value="ECO:0007669"/>
    <property type="project" value="InterPro"/>
</dbReference>
<dbReference type="GO" id="GO:0008270">
    <property type="term" value="F:zinc ion binding"/>
    <property type="evidence" value="ECO:0007669"/>
    <property type="project" value="UniProtKB-KW"/>
</dbReference>
<dbReference type="GO" id="GO:0006508">
    <property type="term" value="P:proteolysis"/>
    <property type="evidence" value="ECO:0007669"/>
    <property type="project" value="UniProtKB-KW"/>
</dbReference>
<dbReference type="GO" id="GO:0016032">
    <property type="term" value="P:viral process"/>
    <property type="evidence" value="ECO:0007669"/>
    <property type="project" value="InterPro"/>
</dbReference>
<dbReference type="CDD" id="cd05482">
    <property type="entry name" value="HIV_retropepsin_like"/>
    <property type="match status" value="1"/>
</dbReference>
<dbReference type="Gene3D" id="1.10.1200.30">
    <property type="match status" value="1"/>
</dbReference>
<dbReference type="Gene3D" id="2.70.40.10">
    <property type="match status" value="1"/>
</dbReference>
<dbReference type="Gene3D" id="2.40.70.10">
    <property type="entry name" value="Acid Proteases"/>
    <property type="match status" value="1"/>
</dbReference>
<dbReference type="Gene3D" id="1.10.375.10">
    <property type="entry name" value="Human Immunodeficiency Virus Type 1 Capsid Protein"/>
    <property type="match status" value="1"/>
</dbReference>
<dbReference type="Gene3D" id="4.10.60.10">
    <property type="entry name" value="Zinc finger, CCHC-type"/>
    <property type="match status" value="1"/>
</dbReference>
<dbReference type="InterPro" id="IPR001969">
    <property type="entry name" value="Aspartic_peptidase_AS"/>
</dbReference>
<dbReference type="InterPro" id="IPR029054">
    <property type="entry name" value="dUTPase-like"/>
</dbReference>
<dbReference type="InterPro" id="IPR036157">
    <property type="entry name" value="dUTPase-like_sf"/>
</dbReference>
<dbReference type="InterPro" id="IPR000467">
    <property type="entry name" value="G_patch_dom"/>
</dbReference>
<dbReference type="InterPro" id="IPR045345">
    <property type="entry name" value="Gag_p24_C"/>
</dbReference>
<dbReference type="InterPro" id="IPR001995">
    <property type="entry name" value="Peptidase_A2_cat"/>
</dbReference>
<dbReference type="InterPro" id="IPR021109">
    <property type="entry name" value="Peptidase_aspartic_dom_sf"/>
</dbReference>
<dbReference type="InterPro" id="IPR050195">
    <property type="entry name" value="Primate_lentivir_Gag_pol-like"/>
</dbReference>
<dbReference type="InterPro" id="IPR034170">
    <property type="entry name" value="Retropepsin-like_cat_dom"/>
</dbReference>
<dbReference type="InterPro" id="IPR018061">
    <property type="entry name" value="Retropepsins"/>
</dbReference>
<dbReference type="InterPro" id="IPR008916">
    <property type="entry name" value="Retrov_capsid_C"/>
</dbReference>
<dbReference type="InterPro" id="IPR008919">
    <property type="entry name" value="Retrov_capsid_N"/>
</dbReference>
<dbReference type="InterPro" id="IPR001878">
    <property type="entry name" value="Znf_CCHC"/>
</dbReference>
<dbReference type="InterPro" id="IPR036875">
    <property type="entry name" value="Znf_CCHC_sf"/>
</dbReference>
<dbReference type="PANTHER" id="PTHR40389">
    <property type="entry name" value="ENDOGENOUS RETROVIRUS GROUP K MEMBER 24 GAG POLYPROTEIN-RELATED"/>
    <property type="match status" value="1"/>
</dbReference>
<dbReference type="PANTHER" id="PTHR40389:SF3">
    <property type="entry name" value="IGE-BINDING PROTEIN"/>
    <property type="match status" value="1"/>
</dbReference>
<dbReference type="Pfam" id="PF00692">
    <property type="entry name" value="dUTPase"/>
    <property type="match status" value="1"/>
</dbReference>
<dbReference type="Pfam" id="PF01585">
    <property type="entry name" value="G-patch"/>
    <property type="match status" value="1"/>
</dbReference>
<dbReference type="Pfam" id="PF00607">
    <property type="entry name" value="Gag_p24"/>
    <property type="match status" value="1"/>
</dbReference>
<dbReference type="Pfam" id="PF19317">
    <property type="entry name" value="Gag_p24_C"/>
    <property type="match status" value="1"/>
</dbReference>
<dbReference type="Pfam" id="PF00077">
    <property type="entry name" value="RVP"/>
    <property type="match status" value="1"/>
</dbReference>
<dbReference type="Pfam" id="PF00098">
    <property type="entry name" value="zf-CCHC"/>
    <property type="match status" value="1"/>
</dbReference>
<dbReference type="Pfam" id="PF14787">
    <property type="entry name" value="zf-CCHC_5"/>
    <property type="match status" value="1"/>
</dbReference>
<dbReference type="SMART" id="SM00443">
    <property type="entry name" value="G_patch"/>
    <property type="match status" value="1"/>
</dbReference>
<dbReference type="SMART" id="SM00343">
    <property type="entry name" value="ZnF_C2HC"/>
    <property type="match status" value="2"/>
</dbReference>
<dbReference type="SUPFAM" id="SSF50630">
    <property type="entry name" value="Acid proteases"/>
    <property type="match status" value="1"/>
</dbReference>
<dbReference type="SUPFAM" id="SSF51283">
    <property type="entry name" value="dUTPase-like"/>
    <property type="match status" value="1"/>
</dbReference>
<dbReference type="SUPFAM" id="SSF47353">
    <property type="entry name" value="Retrovirus capsid dimerization domain-like"/>
    <property type="match status" value="1"/>
</dbReference>
<dbReference type="SUPFAM" id="SSF47943">
    <property type="entry name" value="Retrovirus capsid protein, N-terminal core domain"/>
    <property type="match status" value="1"/>
</dbReference>
<dbReference type="SUPFAM" id="SSF57756">
    <property type="entry name" value="Retrovirus zinc finger-like domains"/>
    <property type="match status" value="1"/>
</dbReference>
<dbReference type="PROSITE" id="PS50175">
    <property type="entry name" value="ASP_PROT_RETROV"/>
    <property type="match status" value="1"/>
</dbReference>
<dbReference type="PROSITE" id="PS00141">
    <property type="entry name" value="ASP_PROTEASE"/>
    <property type="match status" value="1"/>
</dbReference>
<dbReference type="PROSITE" id="PS50174">
    <property type="entry name" value="G_PATCH"/>
    <property type="match status" value="1"/>
</dbReference>
<dbReference type="PROSITE" id="PS50158">
    <property type="entry name" value="ZF_CCHC"/>
    <property type="match status" value="1"/>
</dbReference>
<feature type="signal peptide" evidence="3">
    <location>
        <begin position="1"/>
        <end position="25"/>
    </location>
</feature>
<feature type="chain" id="PRO_0000443280" description="Intracisternal A-particle Gag-related polyprotein">
    <location>
        <begin position="26"/>
        <end position="827"/>
    </location>
</feature>
<feature type="chain" id="PRO_0000443281" description="Phosphorylated protein" evidence="1">
    <location>
        <begin position="26"/>
        <end position="217"/>
    </location>
</feature>
<feature type="chain" id="PRO_0000443282" description="Capsid protein" evidence="1">
    <location>
        <begin position="218"/>
        <end position="441"/>
    </location>
</feature>
<feature type="chain" id="PRO_0000443283" description="Nucleocapsid protein">
    <location>
        <begin position="442"/>
        <end status="unknown"/>
    </location>
</feature>
<feature type="chain" id="PRO_0000026112" description="Protease">
    <location>
        <begin status="unknown"/>
        <end position="827"/>
    </location>
</feature>
<feature type="domain" description="Peptidase A2" evidence="6">
    <location>
        <begin position="690"/>
        <end position="765"/>
    </location>
</feature>
<feature type="domain" description="G-patch" evidence="5">
    <location>
        <begin position="783"/>
        <end position="827"/>
    </location>
</feature>
<feature type="zinc finger region" description="CCHC-type 1" evidence="4">
    <location>
        <begin position="458"/>
        <end position="475"/>
    </location>
</feature>
<feature type="zinc finger region" description="CCHC-type 2" evidence="4">
    <location>
        <begin position="484"/>
        <end position="501"/>
    </location>
</feature>
<feature type="region of interest" description="Disordered" evidence="7">
    <location>
        <begin position="108"/>
        <end position="143"/>
    </location>
</feature>
<feature type="region of interest" description="Disordered" evidence="7">
    <location>
        <begin position="504"/>
        <end position="556"/>
    </location>
</feature>
<feature type="region of interest" description="Disordered" evidence="7">
    <location>
        <begin position="800"/>
        <end position="827"/>
    </location>
</feature>
<feature type="compositionally biased region" description="Acidic residues" evidence="7">
    <location>
        <begin position="119"/>
        <end position="133"/>
    </location>
</feature>
<feature type="compositionally biased region" description="Polar residues" evidence="7">
    <location>
        <begin position="515"/>
        <end position="529"/>
    </location>
</feature>
<feature type="compositionally biased region" description="Basic and acidic residues" evidence="7">
    <location>
        <begin position="800"/>
        <end position="809"/>
    </location>
</feature>
<feature type="active site" description="Protease; shared with dimeric partner" evidence="6">
    <location>
        <position position="695"/>
    </location>
</feature>
<feature type="site" description="Cleavage; by viral protease" evidence="2">
    <location>
        <begin position="22"/>
        <end position="23"/>
    </location>
</feature>
<feature type="site" description="Cleavage; by viral protease" evidence="2">
    <location>
        <begin position="217"/>
        <end position="218"/>
    </location>
</feature>
<feature type="site" description="Cleavage; by viral protease" evidence="2">
    <location>
        <begin position="261"/>
        <end position="262"/>
    </location>
</feature>
<feature type="site" description="Cleavage; by viral protease" evidence="2">
    <location>
        <begin position="441"/>
        <end position="442"/>
    </location>
</feature>
<organismHost>
    <name type="scientific">Mus musculus</name>
    <name type="common">Mouse</name>
    <dbReference type="NCBI Taxonomy" id="10090"/>
</organismHost>
<proteinExistence type="inferred from homology"/>
<name>GAG_IPMA</name>
<accession>P11365</accession>
<accession>Q61577</accession>
<comment type="function">
    <molecule>Protease</molecule>
    <text evidence="6">The aspartyl protease mediates proteolytic cleavages of Gag and Gag-Pol polyproteins during or shortly after the release of the virion from the plasma membrane. Cleavages take place as an ordered, step-wise cascade to yield mature proteins. This process is called maturation. Displays maximal activity during the budding process just prior to particle release from the cell.</text>
</comment>
<comment type="miscellaneous">
    <molecule>Intracisternal A-particle Gag-related polyprotein</molecule>
    <text evidence="8">Intracisternal A particles (IAPs) are defective retroviral elements. Due to extensive mutations in the envelope coding sequence, IAPs can only form defective viral particles confined to the intracisternae of the Golgi. IAPs are an important class of transposable elements that induce genomic mutations and cell transformation by disrupting gene expression.</text>
</comment>
<sequence>MFGLEFFLVLEALLFLFTCYQVVKAGRILDEIQDKLSEVKRGERVGTKRKYGTQNKYTGLSKGLEPEEKLRLGRNTWREIRRKRGKREKKKDQLAEVSRKRSLCSSLDGLGEPALSSSEADEEFSSEETDWEEEAAHYEKKGYQPGKVLANQLRKPKAAGEGQFADWPQGSRLQGPPYAESPPCVVRQPCAERQCAKRQCADSFIPREEQRKIQQAFPVFEGAEGGRVHAPVEYLQIKELAESVRKYGTNANFTLVQLDRLAGMALTPADWQTVVKAALPMMGKYMEWRALWHETAQAQARANAAALTPEQRDWTFDLLTGQGAYSADQTNYHWGAYAQISSTAIRRWKGLSRAGETTGQLTKVVQGPQESFSDFVARMTEAAERIFGESEQAAPLIEQLIYEQATKECRAAIAPRKNKGLQDWLRVCRELGGPLTNAGLAAAILQSQNRSMSRNDQRTCFNCGKPGHFKKDCRAPDKQGGTLTLCSKCGKGYHRADQCRSVRDIKGRVLPPPDSQSAYVPKNGSSGPRSQGLKDMGTGLSGPRKQSERRPRKTHKVDLRAASDFLLMPQMSIQPVPVEPIPSLPLGTMGLILGRGSASTLQGLVVHPELWIVNIPQKYQVLCSSPKGVFSISKGDRIPQLLLLLPDNTREKSAGPEIKKMGSSGNDSAYLVVSLNDRPKLRLKINGKEFEGILDTGADKSIISTHWWPKAWPTTESSHSLQGLGYQSCPTISSVALTWESSEGQQGKFIPYVLPLPVNLWGRDIMQHLGLILSNENAPSGGYSAKAKNIMAKMGYKEGKGLGHQEQGRIEPISPNGNQDRQGLGFP</sequence>
<evidence type="ECO:0000250" key="1">
    <source>
        <dbReference type="UniProtKB" id="P04023"/>
    </source>
</evidence>
<evidence type="ECO:0000250" key="2">
    <source>
        <dbReference type="UniProtKB" id="P07567"/>
    </source>
</evidence>
<evidence type="ECO:0000255" key="3"/>
<evidence type="ECO:0000255" key="4">
    <source>
        <dbReference type="PROSITE-ProRule" id="PRU00047"/>
    </source>
</evidence>
<evidence type="ECO:0000255" key="5">
    <source>
        <dbReference type="PROSITE-ProRule" id="PRU00092"/>
    </source>
</evidence>
<evidence type="ECO:0000255" key="6">
    <source>
        <dbReference type="PROSITE-ProRule" id="PRU00275"/>
    </source>
</evidence>
<evidence type="ECO:0000256" key="7">
    <source>
        <dbReference type="SAM" id="MobiDB-lite"/>
    </source>
</evidence>
<evidence type="ECO:0000305" key="8"/>
<keyword id="KW-0064">Aspartyl protease</keyword>
<keyword id="KW-0378">Hydrolase</keyword>
<keyword id="KW-0479">Metal-binding</keyword>
<keyword id="KW-0645">Protease</keyword>
<keyword id="KW-0677">Repeat</keyword>
<keyword id="KW-0732">Signal</keyword>
<keyword id="KW-0814">Transposable element</keyword>
<keyword id="KW-0862">Zinc</keyword>
<keyword id="KW-0863">Zinc-finger</keyword>